<comment type="catalytic activity">
    <reaction evidence="1">
        <text>(6R)-10-formyltetrahydrofolate + 5-amino-1-(5-phospho-beta-D-ribosyl)imidazole-4-carboxamide = 5-formamido-1-(5-phospho-D-ribosyl)imidazole-4-carboxamide + (6S)-5,6,7,8-tetrahydrofolate</text>
        <dbReference type="Rhea" id="RHEA:22192"/>
        <dbReference type="ChEBI" id="CHEBI:57453"/>
        <dbReference type="ChEBI" id="CHEBI:58467"/>
        <dbReference type="ChEBI" id="CHEBI:58475"/>
        <dbReference type="ChEBI" id="CHEBI:195366"/>
        <dbReference type="EC" id="2.1.2.3"/>
    </reaction>
</comment>
<comment type="catalytic activity">
    <reaction evidence="1">
        <text>IMP + H2O = 5-formamido-1-(5-phospho-D-ribosyl)imidazole-4-carboxamide</text>
        <dbReference type="Rhea" id="RHEA:18445"/>
        <dbReference type="ChEBI" id="CHEBI:15377"/>
        <dbReference type="ChEBI" id="CHEBI:58053"/>
        <dbReference type="ChEBI" id="CHEBI:58467"/>
        <dbReference type="EC" id="3.5.4.10"/>
    </reaction>
</comment>
<comment type="pathway">
    <text evidence="1">Purine metabolism; IMP biosynthesis via de novo pathway; 5-formamido-1-(5-phospho-D-ribosyl)imidazole-4-carboxamide from 5-amino-1-(5-phospho-D-ribosyl)imidazole-4-carboxamide (10-formyl THF route): step 1/1.</text>
</comment>
<comment type="pathway">
    <text evidence="1">Purine metabolism; IMP biosynthesis via de novo pathway; IMP from 5-formamido-1-(5-phospho-D-ribosyl)imidazole-4-carboxamide: step 1/1.</text>
</comment>
<comment type="domain">
    <text evidence="1">The IMP cyclohydrolase activity resides in the N-terminal region.</text>
</comment>
<comment type="similarity">
    <text evidence="1">Belongs to the PurH family.</text>
</comment>
<sequence>MIKQALISVSDKTGIVDFAKSLSDLGVKLLSTGGTAKLLADAGLPVTEVADYTGFPEMLDGRVKTLHPKVHGGILARRDLPEHMQALEQHGIPTIDLLVVNLYPFVATIAKDDCTLADAIENIDIGGPTMLRSAAKNHRDVTVVVDPADYAVVLDEMKANGNAVGYATNFRLATKVFAHTAQYDGAITNYLTSLTDELKHASRSAYPATLNLAFDKVQDLRYGENPHQSAAFYRDLATPAGALANYRQLQGKELSYNNIADSDAAWECVKTFDAPACVIIKHANPCGVAVGNDSADAYAKAFQTDPTSAFGGIIAFNREVDEAAAQAVAKQFVEVLIAPSFSDAAKQVFAAKQNVRLLEIALGDGHNAFDLKRVGGGLLVQSLDSKNVQPSELRVVTKRQPTAKEMDDLLFAWRVAKYVKSNAIVFCGNGMTLGVGAGQMSRVDSARIASIKAQNAGLTLAGSAVASDAFFPFRDGLDVVVAAGATCVIQPGGSMRDDEVIAAADEHNIAMILTGVRHFRH</sequence>
<name>PUR9_BURL3</name>
<organism>
    <name type="scientific">Burkholderia lata (strain ATCC 17760 / DSM 23089 / LMG 22485 / NCIMB 9086 / R18194 / 383)</name>
    <dbReference type="NCBI Taxonomy" id="482957"/>
    <lineage>
        <taxon>Bacteria</taxon>
        <taxon>Pseudomonadati</taxon>
        <taxon>Pseudomonadota</taxon>
        <taxon>Betaproteobacteria</taxon>
        <taxon>Burkholderiales</taxon>
        <taxon>Burkholderiaceae</taxon>
        <taxon>Burkholderia</taxon>
        <taxon>Burkholderia cepacia complex</taxon>
    </lineage>
</organism>
<dbReference type="EC" id="2.1.2.3" evidence="1"/>
<dbReference type="EC" id="3.5.4.10" evidence="1"/>
<dbReference type="EMBL" id="CP000151">
    <property type="protein sequence ID" value="ABB07378.1"/>
    <property type="molecule type" value="Genomic_DNA"/>
</dbReference>
<dbReference type="RefSeq" id="WP_011350966.1">
    <property type="nucleotide sequence ID" value="NC_007510.1"/>
</dbReference>
<dbReference type="SMR" id="Q39JI8"/>
<dbReference type="GeneID" id="45093690"/>
<dbReference type="KEGG" id="bur:Bcep18194_A3777"/>
<dbReference type="PATRIC" id="fig|482957.22.peg.638"/>
<dbReference type="HOGENOM" id="CLU_016316_5_2_4"/>
<dbReference type="UniPathway" id="UPA00074">
    <property type="reaction ID" value="UER00133"/>
</dbReference>
<dbReference type="UniPathway" id="UPA00074">
    <property type="reaction ID" value="UER00135"/>
</dbReference>
<dbReference type="Proteomes" id="UP000002705">
    <property type="component" value="Chromosome 1"/>
</dbReference>
<dbReference type="GO" id="GO:0005829">
    <property type="term" value="C:cytosol"/>
    <property type="evidence" value="ECO:0007669"/>
    <property type="project" value="TreeGrafter"/>
</dbReference>
<dbReference type="GO" id="GO:0003937">
    <property type="term" value="F:IMP cyclohydrolase activity"/>
    <property type="evidence" value="ECO:0007669"/>
    <property type="project" value="UniProtKB-UniRule"/>
</dbReference>
<dbReference type="GO" id="GO:0004643">
    <property type="term" value="F:phosphoribosylaminoimidazolecarboxamide formyltransferase activity"/>
    <property type="evidence" value="ECO:0007669"/>
    <property type="project" value="UniProtKB-UniRule"/>
</dbReference>
<dbReference type="GO" id="GO:0006189">
    <property type="term" value="P:'de novo' IMP biosynthetic process"/>
    <property type="evidence" value="ECO:0007669"/>
    <property type="project" value="UniProtKB-UniRule"/>
</dbReference>
<dbReference type="CDD" id="cd01421">
    <property type="entry name" value="IMPCH"/>
    <property type="match status" value="1"/>
</dbReference>
<dbReference type="FunFam" id="3.40.140.20:FF:000001">
    <property type="entry name" value="Bifunctional purine biosynthesis protein PurH"/>
    <property type="match status" value="1"/>
</dbReference>
<dbReference type="FunFam" id="3.40.140.20:FF:000002">
    <property type="entry name" value="Bifunctional purine biosynthesis protein PurH"/>
    <property type="match status" value="1"/>
</dbReference>
<dbReference type="FunFam" id="3.40.50.1380:FF:000001">
    <property type="entry name" value="Bifunctional purine biosynthesis protein PurH"/>
    <property type="match status" value="1"/>
</dbReference>
<dbReference type="Gene3D" id="3.40.140.20">
    <property type="match status" value="2"/>
</dbReference>
<dbReference type="Gene3D" id="3.40.50.1380">
    <property type="entry name" value="Methylglyoxal synthase-like domain"/>
    <property type="match status" value="1"/>
</dbReference>
<dbReference type="HAMAP" id="MF_00139">
    <property type="entry name" value="PurH"/>
    <property type="match status" value="1"/>
</dbReference>
<dbReference type="InterPro" id="IPR024051">
    <property type="entry name" value="AICAR_Tfase_dup_dom_sf"/>
</dbReference>
<dbReference type="InterPro" id="IPR016193">
    <property type="entry name" value="Cytidine_deaminase-like"/>
</dbReference>
<dbReference type="InterPro" id="IPR011607">
    <property type="entry name" value="MGS-like_dom"/>
</dbReference>
<dbReference type="InterPro" id="IPR036914">
    <property type="entry name" value="MGS-like_dom_sf"/>
</dbReference>
<dbReference type="InterPro" id="IPR002695">
    <property type="entry name" value="PurH-like"/>
</dbReference>
<dbReference type="NCBIfam" id="NF002049">
    <property type="entry name" value="PRK00881.1"/>
    <property type="match status" value="1"/>
</dbReference>
<dbReference type="NCBIfam" id="TIGR00355">
    <property type="entry name" value="purH"/>
    <property type="match status" value="1"/>
</dbReference>
<dbReference type="PANTHER" id="PTHR11692:SF0">
    <property type="entry name" value="BIFUNCTIONAL PURINE BIOSYNTHESIS PROTEIN ATIC"/>
    <property type="match status" value="1"/>
</dbReference>
<dbReference type="PANTHER" id="PTHR11692">
    <property type="entry name" value="BIFUNCTIONAL PURINE BIOSYNTHESIS PROTEIN PURH"/>
    <property type="match status" value="1"/>
</dbReference>
<dbReference type="Pfam" id="PF01808">
    <property type="entry name" value="AICARFT_IMPCHas"/>
    <property type="match status" value="1"/>
</dbReference>
<dbReference type="Pfam" id="PF02142">
    <property type="entry name" value="MGS"/>
    <property type="match status" value="1"/>
</dbReference>
<dbReference type="PIRSF" id="PIRSF000414">
    <property type="entry name" value="AICARFT_IMPCHas"/>
    <property type="match status" value="1"/>
</dbReference>
<dbReference type="SMART" id="SM00798">
    <property type="entry name" value="AICARFT_IMPCHas"/>
    <property type="match status" value="1"/>
</dbReference>
<dbReference type="SMART" id="SM00851">
    <property type="entry name" value="MGS"/>
    <property type="match status" value="1"/>
</dbReference>
<dbReference type="SUPFAM" id="SSF53927">
    <property type="entry name" value="Cytidine deaminase-like"/>
    <property type="match status" value="1"/>
</dbReference>
<dbReference type="SUPFAM" id="SSF52335">
    <property type="entry name" value="Methylglyoxal synthase-like"/>
    <property type="match status" value="1"/>
</dbReference>
<dbReference type="PROSITE" id="PS51855">
    <property type="entry name" value="MGS"/>
    <property type="match status" value="1"/>
</dbReference>
<gene>
    <name evidence="1" type="primary">purH</name>
    <name type="ordered locus">Bcep18194_A3777</name>
</gene>
<reference key="1">
    <citation type="submission" date="2005-10" db="EMBL/GenBank/DDBJ databases">
        <title>Complete sequence of chromosome 1 of Burkholderia sp. 383.</title>
        <authorList>
            <consortium name="US DOE Joint Genome Institute"/>
            <person name="Copeland A."/>
            <person name="Lucas S."/>
            <person name="Lapidus A."/>
            <person name="Barry K."/>
            <person name="Detter J.C."/>
            <person name="Glavina T."/>
            <person name="Hammon N."/>
            <person name="Israni S."/>
            <person name="Pitluck S."/>
            <person name="Chain P."/>
            <person name="Malfatti S."/>
            <person name="Shin M."/>
            <person name="Vergez L."/>
            <person name="Schmutz J."/>
            <person name="Larimer F."/>
            <person name="Land M."/>
            <person name="Kyrpides N."/>
            <person name="Lykidis A."/>
            <person name="Richardson P."/>
        </authorList>
    </citation>
    <scope>NUCLEOTIDE SEQUENCE [LARGE SCALE GENOMIC DNA]</scope>
    <source>
        <strain>ATCC 17760 / DSM 23089 / LMG 22485 / NCIMB 9086 / R18194 / 383</strain>
    </source>
</reference>
<feature type="chain" id="PRO_1000018862" description="Bifunctional purine biosynthesis protein PurH">
    <location>
        <begin position="1"/>
        <end position="521"/>
    </location>
</feature>
<feature type="domain" description="MGS-like" evidence="2">
    <location>
        <begin position="1"/>
        <end position="145"/>
    </location>
</feature>
<protein>
    <recommendedName>
        <fullName evidence="1">Bifunctional purine biosynthesis protein PurH</fullName>
    </recommendedName>
    <domain>
        <recommendedName>
            <fullName evidence="1">Phosphoribosylaminoimidazolecarboxamide formyltransferase</fullName>
            <ecNumber evidence="1">2.1.2.3</ecNumber>
        </recommendedName>
        <alternativeName>
            <fullName evidence="1">AICAR transformylase</fullName>
        </alternativeName>
    </domain>
    <domain>
        <recommendedName>
            <fullName evidence="1">IMP cyclohydrolase</fullName>
            <ecNumber evidence="1">3.5.4.10</ecNumber>
        </recommendedName>
        <alternativeName>
            <fullName evidence="1">ATIC</fullName>
        </alternativeName>
        <alternativeName>
            <fullName evidence="1">IMP synthase</fullName>
        </alternativeName>
        <alternativeName>
            <fullName evidence="1">Inosinicase</fullName>
        </alternativeName>
    </domain>
</protein>
<evidence type="ECO:0000255" key="1">
    <source>
        <dbReference type="HAMAP-Rule" id="MF_00139"/>
    </source>
</evidence>
<evidence type="ECO:0000255" key="2">
    <source>
        <dbReference type="PROSITE-ProRule" id="PRU01202"/>
    </source>
</evidence>
<proteinExistence type="inferred from homology"/>
<keyword id="KW-0378">Hydrolase</keyword>
<keyword id="KW-0511">Multifunctional enzyme</keyword>
<keyword id="KW-0658">Purine biosynthesis</keyword>
<keyword id="KW-0808">Transferase</keyword>
<accession>Q39JI8</accession>